<keyword id="KW-0027">Amidation</keyword>
<keyword id="KW-0044">Antibiotic</keyword>
<keyword id="KW-0929">Antimicrobial</keyword>
<keyword id="KW-0391">Immunity</keyword>
<keyword id="KW-0399">Innate immunity</keyword>
<keyword id="KW-0472">Membrane</keyword>
<keyword id="KW-0964">Secreted</keyword>
<keyword id="KW-0732">Signal</keyword>
<keyword id="KW-1052">Target cell membrane</keyword>
<keyword id="KW-1053">Target membrane</keyword>
<dbReference type="EMBL" id="KC701498">
    <property type="protein sequence ID" value="AGN53405.1"/>
    <property type="molecule type" value="mRNA"/>
</dbReference>
<dbReference type="GO" id="GO:0005576">
    <property type="term" value="C:extracellular region"/>
    <property type="evidence" value="ECO:0007669"/>
    <property type="project" value="UniProtKB-SubCell"/>
</dbReference>
<organism>
    <name type="scientific">Hydra oligactis</name>
    <name type="common">Brown hydra</name>
    <dbReference type="NCBI Taxonomy" id="6088"/>
    <lineage>
        <taxon>Eukaryota</taxon>
        <taxon>Metazoa</taxon>
        <taxon>Cnidaria</taxon>
        <taxon>Hydrozoa</taxon>
        <taxon>Hydroidolina</taxon>
        <taxon>Anthoathecata</taxon>
        <taxon>Aplanulata</taxon>
        <taxon>Hydridae</taxon>
        <taxon>Hydra</taxon>
    </lineage>
</organism>
<reference evidence="6" key="1">
    <citation type="journal article" date="2013" name="Proc. Natl. Acad. Sci. U.S.A.">
        <title>Distinct antimicrobial peptide expression determines host species-specific bacterial associations.</title>
        <authorList>
            <person name="Franzenburg S."/>
            <person name="Walter J."/>
            <person name="Kunzel S."/>
            <person name="Wang J."/>
            <person name="Baines J.F."/>
            <person name="Bosch T.C."/>
            <person name="Fraune S."/>
        </authorList>
    </citation>
    <scope>NUCLEOTIDE SEQUENCE [MRNA]</scope>
    <source>
        <strain>AEP</strain>
    </source>
</reference>
<name>ARM24_HYDOL</name>
<proteinExistence type="inferred from homology"/>
<comment type="function">
    <text evidence="1">Antimicrobial peptide with a broad-spectrum antimicrobial activity. Keeps its antibacterial activity under a wide range of salt concentrations that mimic physiological conditions of human blood, which is surprising, since Hydra is an obligate freshwater animal with nearly no salt tolerance. Does not affect red blood cells.</text>
</comment>
<comment type="subcellular location">
    <subcellularLocation>
        <location evidence="1">Secreted</location>
    </subcellularLocation>
    <subcellularLocation>
        <location evidence="1">Target cell membrane</location>
    </subcellularLocation>
</comment>
<comment type="tissue specificity">
    <text evidence="1 5">Expressed in entodermal epithelium along the body column.</text>
</comment>
<comment type="similarity">
    <text evidence="4">Belongs to the arminin family.</text>
</comment>
<evidence type="ECO:0000250" key="1">
    <source>
        <dbReference type="UniProtKB" id="D2XUU4"/>
    </source>
</evidence>
<evidence type="ECO:0000255" key="2"/>
<evidence type="ECO:0000303" key="3">
    <source>
    </source>
</evidence>
<evidence type="ECO:0000305" key="4"/>
<evidence type="ECO:0000305" key="5">
    <source>
    </source>
</evidence>
<evidence type="ECO:0000312" key="6">
    <source>
        <dbReference type="EMBL" id="AGN53405.1"/>
    </source>
</evidence>
<feature type="signal peptide" evidence="2">
    <location>
        <begin position="1"/>
        <end position="18"/>
    </location>
</feature>
<feature type="propeptide" id="PRO_0000461976" evidence="1">
    <location>
        <begin position="19"/>
        <end position="57"/>
    </location>
</feature>
<feature type="peptide" id="PRO_5004490178" description="Arminin 524" evidence="1">
    <location>
        <begin position="58"/>
        <end position="82"/>
    </location>
</feature>
<feature type="modified residue" description="Alanine amide" evidence="1">
    <location>
        <position position="82"/>
    </location>
</feature>
<protein>
    <recommendedName>
        <fullName evidence="3">Arminin 524</fullName>
    </recommendedName>
</protein>
<accession>R9UCX1</accession>
<sequence>MKAVFAILFLAFIALTYAKSYDEVKEEIKNEVEREIFEDLEEESDELDNDVEEFNDAKPWRRWRRIRWRKIVPYIPAIVKAAGKK</sequence>